<keyword id="KW-0539">Nucleus</keyword>
<keyword id="KW-1185">Reference proteome</keyword>
<keyword id="KW-0804">Transcription</keyword>
<keyword id="KW-0805">Transcription regulation</keyword>
<proteinExistence type="evidence at transcript level"/>
<comment type="function">
    <text evidence="1">Probable transcription factor.</text>
</comment>
<comment type="subcellular location">
    <subcellularLocation>
        <location evidence="2">Nucleus</location>
    </subcellularLocation>
</comment>
<comment type="tissue specificity">
    <text evidence="3">Expressed just outside the vascular bundles in the rosette stem and the leaf traces. Not detected in floral primordia.</text>
</comment>
<comment type="miscellaneous">
    <text evidence="5">Assigned as a member of the MYB-related gene family, I-box-binding-like subfamily.</text>
</comment>
<comment type="sequence caution" evidence="4">
    <conflict type="erroneous termination">
        <sequence resource="EMBL-CDS" id="ABK28092"/>
    </conflict>
    <text>Extended C-terminus.</text>
</comment>
<name>RADL4_ARATH</name>
<feature type="chain" id="PRO_0000419444" description="Protein RADIALIS-like 4">
    <location>
        <begin position="1"/>
        <end position="77"/>
    </location>
</feature>
<feature type="domain" description="SANT" evidence="2">
    <location>
        <begin position="6"/>
        <end position="61"/>
    </location>
</feature>
<feature type="sequence conflict" description="In Ref. 4; ABD24441." evidence="4" ref="4">
    <original>DTP</original>
    <variation>TLL</variation>
    <location>
        <begin position="29"/>
        <end position="31"/>
    </location>
</feature>
<feature type="sequence conflict" description="In Ref. 4; ABD24441." evidence="4" ref="4">
    <original>D</original>
    <variation>G</variation>
    <location>
        <position position="59"/>
    </location>
</feature>
<gene>
    <name type="primary">RL4</name>
    <name type="ordered locus">At2g18328</name>
    <name type="ORF">T30D6</name>
</gene>
<accession>Q1G3C4</accession>
<accession>A0MDZ0</accession>
<accession>Q1A174</accession>
<dbReference type="EMBL" id="AC006439">
    <property type="status" value="NOT_ANNOTATED_CDS"/>
    <property type="molecule type" value="Genomic_DNA"/>
</dbReference>
<dbReference type="EMBL" id="CP002685">
    <property type="protein sequence ID" value="AEC06756.1"/>
    <property type="molecule type" value="Genomic_DNA"/>
</dbReference>
<dbReference type="EMBL" id="DQ487660">
    <property type="protein sequence ID" value="ABF59432.1"/>
    <property type="molecule type" value="Genomic_DNA"/>
</dbReference>
<dbReference type="EMBL" id="DQ652756">
    <property type="protein sequence ID" value="ABK28092.1"/>
    <property type="status" value="ALT_SEQ"/>
    <property type="molecule type" value="Genomic_DNA"/>
</dbReference>
<dbReference type="EMBL" id="DQ395345">
    <property type="protein sequence ID" value="ABD24441.1"/>
    <property type="molecule type" value="mRNA"/>
</dbReference>
<dbReference type="RefSeq" id="NP_001077912.1">
    <property type="nucleotide sequence ID" value="NM_001084443.2"/>
</dbReference>
<dbReference type="SMR" id="Q1G3C4"/>
<dbReference type="BioGRID" id="624094">
    <property type="interactions" value="2"/>
</dbReference>
<dbReference type="FunCoup" id="Q1G3C4">
    <property type="interactions" value="8"/>
</dbReference>
<dbReference type="IntAct" id="Q1G3C4">
    <property type="interactions" value="2"/>
</dbReference>
<dbReference type="STRING" id="3702.Q1G3C4"/>
<dbReference type="PaxDb" id="3702-AT2G18328.1"/>
<dbReference type="ProteomicsDB" id="236565"/>
<dbReference type="EnsemblPlants" id="AT2G18328.1">
    <property type="protein sequence ID" value="AT2G18328.1"/>
    <property type="gene ID" value="AT2G18328"/>
</dbReference>
<dbReference type="GeneID" id="5007884"/>
<dbReference type="Gramene" id="AT2G18328.1">
    <property type="protein sequence ID" value="AT2G18328.1"/>
    <property type="gene ID" value="AT2G18328"/>
</dbReference>
<dbReference type="KEGG" id="ath:AT2G18328"/>
<dbReference type="Araport" id="AT2G18328"/>
<dbReference type="TAIR" id="AT2G18328">
    <property type="gene designation" value="RL4"/>
</dbReference>
<dbReference type="eggNOG" id="KOG0724">
    <property type="taxonomic scope" value="Eukaryota"/>
</dbReference>
<dbReference type="HOGENOM" id="CLU_137624_1_2_1"/>
<dbReference type="InParanoid" id="Q1G3C4"/>
<dbReference type="OMA" id="HECANKE"/>
<dbReference type="PhylomeDB" id="Q1G3C4"/>
<dbReference type="PRO" id="PR:Q1G3C4"/>
<dbReference type="Proteomes" id="UP000006548">
    <property type="component" value="Chromosome 2"/>
</dbReference>
<dbReference type="ExpressionAtlas" id="Q1G3C4">
    <property type="expression patterns" value="baseline and differential"/>
</dbReference>
<dbReference type="GO" id="GO:0005829">
    <property type="term" value="C:cytosol"/>
    <property type="evidence" value="ECO:0007005"/>
    <property type="project" value="TAIR"/>
</dbReference>
<dbReference type="GO" id="GO:0005634">
    <property type="term" value="C:nucleus"/>
    <property type="evidence" value="ECO:0007669"/>
    <property type="project" value="UniProtKB-SubCell"/>
</dbReference>
<dbReference type="GO" id="GO:0003700">
    <property type="term" value="F:DNA-binding transcription factor activity"/>
    <property type="evidence" value="ECO:0007669"/>
    <property type="project" value="InterPro"/>
</dbReference>
<dbReference type="CDD" id="cd00167">
    <property type="entry name" value="SANT"/>
    <property type="match status" value="1"/>
</dbReference>
<dbReference type="FunFam" id="1.10.10.60:FF:000154">
    <property type="entry name" value="Transcription factor SRM1"/>
    <property type="match status" value="1"/>
</dbReference>
<dbReference type="Gene3D" id="1.10.10.60">
    <property type="entry name" value="Homeodomain-like"/>
    <property type="match status" value="1"/>
</dbReference>
<dbReference type="InterPro" id="IPR009057">
    <property type="entry name" value="Homeodomain-like_sf"/>
</dbReference>
<dbReference type="InterPro" id="IPR044636">
    <property type="entry name" value="RADIALIS-like"/>
</dbReference>
<dbReference type="InterPro" id="IPR001005">
    <property type="entry name" value="SANT/Myb"/>
</dbReference>
<dbReference type="InterPro" id="IPR017884">
    <property type="entry name" value="SANT_dom"/>
</dbReference>
<dbReference type="PANTHER" id="PTHR43952">
    <property type="entry name" value="MYB FAMILY TRANSCRIPTION FACTOR-RELATED"/>
    <property type="match status" value="1"/>
</dbReference>
<dbReference type="PANTHER" id="PTHR43952:SF106">
    <property type="entry name" value="PROTEIN RADIALIS-LIKE 4"/>
    <property type="match status" value="1"/>
</dbReference>
<dbReference type="Pfam" id="PF00249">
    <property type="entry name" value="Myb_DNA-binding"/>
    <property type="match status" value="1"/>
</dbReference>
<dbReference type="SMART" id="SM00717">
    <property type="entry name" value="SANT"/>
    <property type="match status" value="1"/>
</dbReference>
<dbReference type="SUPFAM" id="SSF46689">
    <property type="entry name" value="Homeodomain-like"/>
    <property type="match status" value="1"/>
</dbReference>
<dbReference type="PROSITE" id="PS51293">
    <property type="entry name" value="SANT"/>
    <property type="match status" value="1"/>
</dbReference>
<sequence>MASSSMSTSSWTAREDKQFEMALAKFDKDTPDRWQKIARAVGGKSTEEVKRHYELLLRDVNDIESGRYPQPRYRNTN</sequence>
<organism>
    <name type="scientific">Arabidopsis thaliana</name>
    <name type="common">Mouse-ear cress</name>
    <dbReference type="NCBI Taxonomy" id="3702"/>
    <lineage>
        <taxon>Eukaryota</taxon>
        <taxon>Viridiplantae</taxon>
        <taxon>Streptophyta</taxon>
        <taxon>Embryophyta</taxon>
        <taxon>Tracheophyta</taxon>
        <taxon>Spermatophyta</taxon>
        <taxon>Magnoliopsida</taxon>
        <taxon>eudicotyledons</taxon>
        <taxon>Gunneridae</taxon>
        <taxon>Pentapetalae</taxon>
        <taxon>rosids</taxon>
        <taxon>malvids</taxon>
        <taxon>Brassicales</taxon>
        <taxon>Brassicaceae</taxon>
        <taxon>Camelineae</taxon>
        <taxon>Arabidopsis</taxon>
    </lineage>
</organism>
<protein>
    <recommendedName>
        <fullName>Protein RADIALIS-like 4</fullName>
        <shortName>AtRL4</shortName>
        <shortName>Protein RAD-like 4</shortName>
    </recommendedName>
</protein>
<evidence type="ECO:0000250" key="1"/>
<evidence type="ECO:0000255" key="2">
    <source>
        <dbReference type="PROSITE-ProRule" id="PRU00624"/>
    </source>
</evidence>
<evidence type="ECO:0000269" key="3">
    <source>
    </source>
</evidence>
<evidence type="ECO:0000305" key="4"/>
<evidence type="ECO:0000305" key="5">
    <source>
    </source>
</evidence>
<reference key="1">
    <citation type="journal article" date="1999" name="Nature">
        <title>Sequence and analysis of chromosome 2 of the plant Arabidopsis thaliana.</title>
        <authorList>
            <person name="Lin X."/>
            <person name="Kaul S."/>
            <person name="Rounsley S.D."/>
            <person name="Shea T.P."/>
            <person name="Benito M.-I."/>
            <person name="Town C.D."/>
            <person name="Fujii C.Y."/>
            <person name="Mason T.M."/>
            <person name="Bowman C.L."/>
            <person name="Barnstead M.E."/>
            <person name="Feldblyum T.V."/>
            <person name="Buell C.R."/>
            <person name="Ketchum K.A."/>
            <person name="Lee J.J."/>
            <person name="Ronning C.M."/>
            <person name="Koo H.L."/>
            <person name="Moffat K.S."/>
            <person name="Cronin L.A."/>
            <person name="Shen M."/>
            <person name="Pai G."/>
            <person name="Van Aken S."/>
            <person name="Umayam L."/>
            <person name="Tallon L.J."/>
            <person name="Gill J.E."/>
            <person name="Adams M.D."/>
            <person name="Carrera A.J."/>
            <person name="Creasy T.H."/>
            <person name="Goodman H.M."/>
            <person name="Somerville C.R."/>
            <person name="Copenhaver G.P."/>
            <person name="Preuss D."/>
            <person name="Nierman W.C."/>
            <person name="White O."/>
            <person name="Eisen J.A."/>
            <person name="Salzberg S.L."/>
            <person name="Fraser C.M."/>
            <person name="Venter J.C."/>
        </authorList>
    </citation>
    <scope>NUCLEOTIDE SEQUENCE [LARGE SCALE GENOMIC DNA]</scope>
    <source>
        <strain>cv. Columbia</strain>
    </source>
</reference>
<reference key="2">
    <citation type="journal article" date="2017" name="Plant J.">
        <title>Araport11: a complete reannotation of the Arabidopsis thaliana reference genome.</title>
        <authorList>
            <person name="Cheng C.Y."/>
            <person name="Krishnakumar V."/>
            <person name="Chan A.P."/>
            <person name="Thibaud-Nissen F."/>
            <person name="Schobel S."/>
            <person name="Town C.D."/>
        </authorList>
    </citation>
    <scope>GENOME REANNOTATION</scope>
    <source>
        <strain>cv. Columbia</strain>
    </source>
</reference>
<reference key="3">
    <citation type="journal article" date="2006" name="Plant Biotechnol. J.">
        <title>Simultaneous high-throughput recombinational cloning of open reading frames in closed and open configurations.</title>
        <authorList>
            <person name="Underwood B.A."/>
            <person name="Vanderhaeghen R."/>
            <person name="Whitford R."/>
            <person name="Town C.D."/>
            <person name="Hilson P."/>
        </authorList>
    </citation>
    <scope>NUCLEOTIDE SEQUENCE [LARGE SCALE GENOMIC DNA]</scope>
    <source>
        <strain>cv. Columbia</strain>
    </source>
</reference>
<reference key="4">
    <citation type="journal article" date="2007" name="Plant J.">
        <title>Diversification and co-option of RAD-like genes in the evolution of floral asymmetry.</title>
        <authorList>
            <person name="Baxter C.E.L."/>
            <person name="Costa M.M.R."/>
            <person name="Coen E.S."/>
        </authorList>
    </citation>
    <scope>NUCLEOTIDE SEQUENCE [MRNA] OF 18-77</scope>
    <scope>GENE FAMILY</scope>
    <scope>TISSUE SPECIFICITY</scope>
</reference>
<reference key="5">
    <citation type="journal article" date="2006" name="Plant Mol. Biol.">
        <title>The MYB transcription factor superfamily of Arabidopsis: expression analysis and phylogenetic comparison with the rice MYB family.</title>
        <authorList>
            <person name="Chen Y."/>
            <person name="Yang X."/>
            <person name="He K."/>
            <person name="Liu M."/>
            <person name="Li J."/>
            <person name="Gao Z."/>
            <person name="Lin Z."/>
            <person name="Zhang Y."/>
            <person name="Wang X."/>
            <person name="Qiu X."/>
            <person name="Shen Y."/>
            <person name="Zhang L."/>
            <person name="Deng X."/>
            <person name="Luo J."/>
            <person name="Deng X.-W."/>
            <person name="Chen Z."/>
            <person name="Gu H."/>
            <person name="Qu L.-J."/>
        </authorList>
    </citation>
    <scope>GENE FAMILY</scope>
</reference>
<reference key="6">
    <citation type="journal article" date="2008" name="Biosci. Biotechnol. Biochem.">
        <title>A small subfamily of Arabidopsis RADIALIS-LIKE SANT/MYB genes: a link to HOOKLESS1-mediated signal transduction during early morphogenesis.</title>
        <authorList>
            <person name="Hamaguchi A."/>
            <person name="Yamashino T."/>
            <person name="Koizumi N."/>
            <person name="Kiba T."/>
            <person name="Kojima M."/>
            <person name="Sakakibara H."/>
            <person name="Mizuno T."/>
        </authorList>
    </citation>
    <scope>GENE FAMILY</scope>
</reference>